<protein>
    <recommendedName>
        <fullName evidence="1">Small ribosomal subunit protein uS2</fullName>
    </recommendedName>
    <alternativeName>
        <fullName evidence="3">30S ribosomal protein S2</fullName>
    </alternativeName>
</protein>
<keyword id="KW-0687">Ribonucleoprotein</keyword>
<keyword id="KW-0689">Ribosomal protein</keyword>
<accession>Q4USR2</accession>
<feature type="chain" id="PRO_1000004114" description="Small ribosomal subunit protein uS2">
    <location>
        <begin position="1"/>
        <end position="275"/>
    </location>
</feature>
<feature type="region of interest" description="Disordered" evidence="2">
    <location>
        <begin position="226"/>
        <end position="275"/>
    </location>
</feature>
<feature type="compositionally biased region" description="Low complexity" evidence="2">
    <location>
        <begin position="264"/>
        <end position="275"/>
    </location>
</feature>
<dbReference type="EMBL" id="CP000050">
    <property type="protein sequence ID" value="AAY49911.1"/>
    <property type="molecule type" value="Genomic_DNA"/>
</dbReference>
<dbReference type="RefSeq" id="WP_011269915.1">
    <property type="nucleotide sequence ID" value="NZ_CP155948.1"/>
</dbReference>
<dbReference type="SMR" id="Q4USR2"/>
<dbReference type="KEGG" id="xcb:XC_2863"/>
<dbReference type="HOGENOM" id="CLU_040318_1_2_6"/>
<dbReference type="Proteomes" id="UP000000420">
    <property type="component" value="Chromosome"/>
</dbReference>
<dbReference type="GO" id="GO:0022627">
    <property type="term" value="C:cytosolic small ribosomal subunit"/>
    <property type="evidence" value="ECO:0007669"/>
    <property type="project" value="TreeGrafter"/>
</dbReference>
<dbReference type="GO" id="GO:0003735">
    <property type="term" value="F:structural constituent of ribosome"/>
    <property type="evidence" value="ECO:0007669"/>
    <property type="project" value="InterPro"/>
</dbReference>
<dbReference type="GO" id="GO:0006412">
    <property type="term" value="P:translation"/>
    <property type="evidence" value="ECO:0007669"/>
    <property type="project" value="UniProtKB-UniRule"/>
</dbReference>
<dbReference type="CDD" id="cd01425">
    <property type="entry name" value="RPS2"/>
    <property type="match status" value="1"/>
</dbReference>
<dbReference type="FunFam" id="1.10.287.610:FF:000001">
    <property type="entry name" value="30S ribosomal protein S2"/>
    <property type="match status" value="1"/>
</dbReference>
<dbReference type="Gene3D" id="3.40.50.10490">
    <property type="entry name" value="Glucose-6-phosphate isomerase like protein, domain 1"/>
    <property type="match status" value="1"/>
</dbReference>
<dbReference type="Gene3D" id="1.10.287.610">
    <property type="entry name" value="Helix hairpin bin"/>
    <property type="match status" value="1"/>
</dbReference>
<dbReference type="HAMAP" id="MF_00291_B">
    <property type="entry name" value="Ribosomal_uS2_B"/>
    <property type="match status" value="1"/>
</dbReference>
<dbReference type="InterPro" id="IPR001865">
    <property type="entry name" value="Ribosomal_uS2"/>
</dbReference>
<dbReference type="InterPro" id="IPR005706">
    <property type="entry name" value="Ribosomal_uS2_bac/mit/plastid"/>
</dbReference>
<dbReference type="InterPro" id="IPR018130">
    <property type="entry name" value="Ribosomal_uS2_CS"/>
</dbReference>
<dbReference type="InterPro" id="IPR023591">
    <property type="entry name" value="Ribosomal_uS2_flav_dom_sf"/>
</dbReference>
<dbReference type="NCBIfam" id="TIGR01011">
    <property type="entry name" value="rpsB_bact"/>
    <property type="match status" value="1"/>
</dbReference>
<dbReference type="PANTHER" id="PTHR12534">
    <property type="entry name" value="30S RIBOSOMAL PROTEIN S2 PROKARYOTIC AND ORGANELLAR"/>
    <property type="match status" value="1"/>
</dbReference>
<dbReference type="PANTHER" id="PTHR12534:SF0">
    <property type="entry name" value="SMALL RIBOSOMAL SUBUNIT PROTEIN US2M"/>
    <property type="match status" value="1"/>
</dbReference>
<dbReference type="Pfam" id="PF00318">
    <property type="entry name" value="Ribosomal_S2"/>
    <property type="match status" value="1"/>
</dbReference>
<dbReference type="PRINTS" id="PR00395">
    <property type="entry name" value="RIBOSOMALS2"/>
</dbReference>
<dbReference type="SUPFAM" id="SSF52313">
    <property type="entry name" value="Ribosomal protein S2"/>
    <property type="match status" value="1"/>
</dbReference>
<dbReference type="PROSITE" id="PS00962">
    <property type="entry name" value="RIBOSOMAL_S2_1"/>
    <property type="match status" value="1"/>
</dbReference>
<dbReference type="PROSITE" id="PS00963">
    <property type="entry name" value="RIBOSOMAL_S2_2"/>
    <property type="match status" value="1"/>
</dbReference>
<gene>
    <name evidence="1" type="primary">rpsB</name>
    <name type="ordered locus">XC_2863</name>
</gene>
<organism>
    <name type="scientific">Xanthomonas campestris pv. campestris (strain 8004)</name>
    <dbReference type="NCBI Taxonomy" id="314565"/>
    <lineage>
        <taxon>Bacteria</taxon>
        <taxon>Pseudomonadati</taxon>
        <taxon>Pseudomonadota</taxon>
        <taxon>Gammaproteobacteria</taxon>
        <taxon>Lysobacterales</taxon>
        <taxon>Lysobacteraceae</taxon>
        <taxon>Xanthomonas</taxon>
    </lineage>
</organism>
<evidence type="ECO:0000255" key="1">
    <source>
        <dbReference type="HAMAP-Rule" id="MF_00291"/>
    </source>
</evidence>
<evidence type="ECO:0000256" key="2">
    <source>
        <dbReference type="SAM" id="MobiDB-lite"/>
    </source>
</evidence>
<evidence type="ECO:0000305" key="3"/>
<proteinExistence type="inferred from homology"/>
<name>RS2_XANC8</name>
<sequence length="275" mass="30169">MPQVTMRQMLEAGVHFGHQTRYWNPKMAPYIFGARGKIHIINLEKTVPLFNDAMNFLSSIAQKRGTVLFLGTKRSARESIKEEAERCNMPFMTQRWLGGTLTNFRTVKQSVARLKELEAAETDGTFEKLVKHEVLGLRREREKLDASLGGIKEMNRLPDAIFVIDIGHEDIAIKEAKKLGIPVIAVVDTNYDPALVDYAIPGNDDAIRAVQLYARAAADAVLEGKAAAPNSASVREEEFSAEAGDEGKGRRAPAKKATEKKADAPAAAPEAPAAE</sequence>
<comment type="similarity">
    <text evidence="1">Belongs to the universal ribosomal protein uS2 family.</text>
</comment>
<reference key="1">
    <citation type="journal article" date="2005" name="Genome Res.">
        <title>Comparative and functional genomic analyses of the pathogenicity of phytopathogen Xanthomonas campestris pv. campestris.</title>
        <authorList>
            <person name="Qian W."/>
            <person name="Jia Y."/>
            <person name="Ren S.-X."/>
            <person name="He Y.-Q."/>
            <person name="Feng J.-X."/>
            <person name="Lu L.-F."/>
            <person name="Sun Q."/>
            <person name="Ying G."/>
            <person name="Tang D.-J."/>
            <person name="Tang H."/>
            <person name="Wu W."/>
            <person name="Hao P."/>
            <person name="Wang L."/>
            <person name="Jiang B.-L."/>
            <person name="Zeng S."/>
            <person name="Gu W.-Y."/>
            <person name="Lu G."/>
            <person name="Rong L."/>
            <person name="Tian Y."/>
            <person name="Yao Z."/>
            <person name="Fu G."/>
            <person name="Chen B."/>
            <person name="Fang R."/>
            <person name="Qiang B."/>
            <person name="Chen Z."/>
            <person name="Zhao G.-P."/>
            <person name="Tang J.-L."/>
            <person name="He C."/>
        </authorList>
    </citation>
    <scope>NUCLEOTIDE SEQUENCE [LARGE SCALE GENOMIC DNA]</scope>
    <source>
        <strain>8004</strain>
    </source>
</reference>